<name>APAH_HAEDU</name>
<accession>Q7VLX9</accession>
<evidence type="ECO:0000255" key="1">
    <source>
        <dbReference type="HAMAP-Rule" id="MF_00199"/>
    </source>
</evidence>
<gene>
    <name evidence="1" type="primary">apaH</name>
    <name type="ordered locus">HD_1263</name>
</gene>
<organism>
    <name type="scientific">Haemophilus ducreyi (strain 35000HP / ATCC 700724)</name>
    <dbReference type="NCBI Taxonomy" id="233412"/>
    <lineage>
        <taxon>Bacteria</taxon>
        <taxon>Pseudomonadati</taxon>
        <taxon>Pseudomonadota</taxon>
        <taxon>Gammaproteobacteria</taxon>
        <taxon>Pasteurellales</taxon>
        <taxon>Pasteurellaceae</taxon>
        <taxon>Haemophilus</taxon>
    </lineage>
</organism>
<feature type="chain" id="PRO_0000197992" description="Bis(5'-nucleosyl)-tetraphosphatase, symmetrical">
    <location>
        <begin position="1"/>
        <end position="270"/>
    </location>
</feature>
<dbReference type="EC" id="3.6.1.41" evidence="1"/>
<dbReference type="EMBL" id="AE017143">
    <property type="protein sequence ID" value="AAP96091.1"/>
    <property type="molecule type" value="Genomic_DNA"/>
</dbReference>
<dbReference type="RefSeq" id="WP_010945140.1">
    <property type="nucleotide sequence ID" value="NC_002940.2"/>
</dbReference>
<dbReference type="SMR" id="Q7VLX9"/>
<dbReference type="STRING" id="233412.HD_1263"/>
<dbReference type="KEGG" id="hdu:HD_1263"/>
<dbReference type="eggNOG" id="COG0639">
    <property type="taxonomic scope" value="Bacteria"/>
</dbReference>
<dbReference type="HOGENOM" id="CLU_056184_2_0_6"/>
<dbReference type="OrthoDB" id="9807890at2"/>
<dbReference type="Proteomes" id="UP000001022">
    <property type="component" value="Chromosome"/>
</dbReference>
<dbReference type="GO" id="GO:0008803">
    <property type="term" value="F:bis(5'-nucleosyl)-tetraphosphatase (symmetrical) activity"/>
    <property type="evidence" value="ECO:0007669"/>
    <property type="project" value="UniProtKB-UniRule"/>
</dbReference>
<dbReference type="CDD" id="cd07422">
    <property type="entry name" value="MPP_ApaH"/>
    <property type="match status" value="1"/>
</dbReference>
<dbReference type="Gene3D" id="3.60.21.10">
    <property type="match status" value="1"/>
</dbReference>
<dbReference type="HAMAP" id="MF_00199">
    <property type="entry name" value="ApaH"/>
    <property type="match status" value="1"/>
</dbReference>
<dbReference type="InterPro" id="IPR004617">
    <property type="entry name" value="ApaH"/>
</dbReference>
<dbReference type="InterPro" id="IPR004843">
    <property type="entry name" value="Calcineurin-like_PHP_ApaH"/>
</dbReference>
<dbReference type="InterPro" id="IPR029052">
    <property type="entry name" value="Metallo-depent_PP-like"/>
</dbReference>
<dbReference type="NCBIfam" id="TIGR00668">
    <property type="entry name" value="apaH"/>
    <property type="match status" value="1"/>
</dbReference>
<dbReference type="NCBIfam" id="NF001204">
    <property type="entry name" value="PRK00166.1"/>
    <property type="match status" value="1"/>
</dbReference>
<dbReference type="PANTHER" id="PTHR40942">
    <property type="match status" value="1"/>
</dbReference>
<dbReference type="PANTHER" id="PTHR40942:SF4">
    <property type="entry name" value="CYTOCHROME C5"/>
    <property type="match status" value="1"/>
</dbReference>
<dbReference type="Pfam" id="PF00149">
    <property type="entry name" value="Metallophos"/>
    <property type="match status" value="1"/>
</dbReference>
<dbReference type="PIRSF" id="PIRSF000903">
    <property type="entry name" value="B5n-ttraPtase_sm"/>
    <property type="match status" value="1"/>
</dbReference>
<dbReference type="SUPFAM" id="SSF56300">
    <property type="entry name" value="Metallo-dependent phosphatases"/>
    <property type="match status" value="1"/>
</dbReference>
<comment type="function">
    <text evidence="1">Hydrolyzes diadenosine 5',5'''-P1,P4-tetraphosphate to yield ADP.</text>
</comment>
<comment type="catalytic activity">
    <reaction evidence="1">
        <text>P(1),P(4)-bis(5'-adenosyl) tetraphosphate + H2O = 2 ADP + 2 H(+)</text>
        <dbReference type="Rhea" id="RHEA:24252"/>
        <dbReference type="ChEBI" id="CHEBI:15377"/>
        <dbReference type="ChEBI" id="CHEBI:15378"/>
        <dbReference type="ChEBI" id="CHEBI:58141"/>
        <dbReference type="ChEBI" id="CHEBI:456216"/>
        <dbReference type="EC" id="3.6.1.41"/>
    </reaction>
</comment>
<comment type="similarity">
    <text evidence="1">Belongs to the Ap4A hydrolase family.</text>
</comment>
<proteinExistence type="inferred from homology"/>
<reference key="1">
    <citation type="submission" date="2003-06" db="EMBL/GenBank/DDBJ databases">
        <title>The complete genome sequence of Haemophilus ducreyi.</title>
        <authorList>
            <person name="Munson R.S. Jr."/>
            <person name="Ray W.C."/>
            <person name="Mahairas G."/>
            <person name="Sabo P."/>
            <person name="Mungur R."/>
            <person name="Johnson L."/>
            <person name="Nguyen D."/>
            <person name="Wang J."/>
            <person name="Forst C."/>
            <person name="Hood L."/>
        </authorList>
    </citation>
    <scope>NUCLEOTIDE SEQUENCE [LARGE SCALE GENOMIC DNA]</scope>
    <source>
        <strain>35000HP / ATCC 700724</strain>
    </source>
</reference>
<protein>
    <recommendedName>
        <fullName evidence="1">Bis(5'-nucleosyl)-tetraphosphatase, symmetrical</fullName>
        <ecNumber evidence="1">3.6.1.41</ecNumber>
    </recommendedName>
    <alternativeName>
        <fullName evidence="1">Ap4A hydrolase</fullName>
    </alternativeName>
    <alternativeName>
        <fullName evidence="1">Diadenosine 5',5'''-P1,P4-tetraphosphate pyrophosphohydrolase</fullName>
    </alternativeName>
    <alternativeName>
        <fullName evidence="1">Diadenosine tetraphosphatase</fullName>
    </alternativeName>
</protein>
<keyword id="KW-0378">Hydrolase</keyword>
<keyword id="KW-1185">Reference proteome</keyword>
<sequence>MATYIMGDLHGCFTEFQQLLDKISYNPNYDELWLTGDIVARGEHSLACLRFIKDPKNNIKTVLGNHDLHLLATLVGIKKVKPTDKLEALFSAPDRLELQHWLRKQPLMVQHPTHNFLLVHAGISPEWDLSTTLSCAREAEMILQSDNYADYLAEMYDNTPDQWQDNLTGIARWRYILNAFTRMRFCYADKRLDFSCKLPIEKAPVTLKPWLELDNPLYDTHDILFGHWASLMGKTSRSNIYALDTGCVWGNHLTIINWETKQIFRQERLK</sequence>